<dbReference type="EC" id="2.3.1.181" evidence="1"/>
<dbReference type="EMBL" id="AE016823">
    <property type="protein sequence ID" value="AAS70643.1"/>
    <property type="molecule type" value="Genomic_DNA"/>
</dbReference>
<dbReference type="SMR" id="Q72QP1"/>
<dbReference type="KEGG" id="lic:LIC_12072"/>
<dbReference type="HOGENOM" id="CLU_035168_1_3_12"/>
<dbReference type="UniPathway" id="UPA00538">
    <property type="reaction ID" value="UER00592"/>
</dbReference>
<dbReference type="Proteomes" id="UP000007037">
    <property type="component" value="Chromosome I"/>
</dbReference>
<dbReference type="GO" id="GO:0005737">
    <property type="term" value="C:cytoplasm"/>
    <property type="evidence" value="ECO:0007669"/>
    <property type="project" value="UniProtKB-SubCell"/>
</dbReference>
<dbReference type="GO" id="GO:0033819">
    <property type="term" value="F:lipoyl(octanoyl) transferase activity"/>
    <property type="evidence" value="ECO:0007669"/>
    <property type="project" value="UniProtKB-EC"/>
</dbReference>
<dbReference type="GO" id="GO:0036211">
    <property type="term" value="P:protein modification process"/>
    <property type="evidence" value="ECO:0007669"/>
    <property type="project" value="InterPro"/>
</dbReference>
<dbReference type="CDD" id="cd16444">
    <property type="entry name" value="LipB"/>
    <property type="match status" value="1"/>
</dbReference>
<dbReference type="FunFam" id="3.30.930.10:FF:000140">
    <property type="entry name" value="Octanoyltransferase"/>
    <property type="match status" value="1"/>
</dbReference>
<dbReference type="Gene3D" id="3.30.930.10">
    <property type="entry name" value="Bira Bifunctional Protein, Domain 2"/>
    <property type="match status" value="1"/>
</dbReference>
<dbReference type="HAMAP" id="MF_00013">
    <property type="entry name" value="LipB"/>
    <property type="match status" value="1"/>
</dbReference>
<dbReference type="InterPro" id="IPR045864">
    <property type="entry name" value="aa-tRNA-synth_II/BPL/LPL"/>
</dbReference>
<dbReference type="InterPro" id="IPR004143">
    <property type="entry name" value="BPL_LPL_catalytic"/>
</dbReference>
<dbReference type="InterPro" id="IPR000544">
    <property type="entry name" value="Octanoyltransferase"/>
</dbReference>
<dbReference type="InterPro" id="IPR020605">
    <property type="entry name" value="Octanoyltransferase_CS"/>
</dbReference>
<dbReference type="NCBIfam" id="TIGR00214">
    <property type="entry name" value="lipB"/>
    <property type="match status" value="1"/>
</dbReference>
<dbReference type="PANTHER" id="PTHR10993:SF7">
    <property type="entry name" value="LIPOYLTRANSFERASE 2, MITOCHONDRIAL-RELATED"/>
    <property type="match status" value="1"/>
</dbReference>
<dbReference type="PANTHER" id="PTHR10993">
    <property type="entry name" value="OCTANOYLTRANSFERASE"/>
    <property type="match status" value="1"/>
</dbReference>
<dbReference type="Pfam" id="PF21948">
    <property type="entry name" value="LplA-B_cat"/>
    <property type="match status" value="1"/>
</dbReference>
<dbReference type="PIRSF" id="PIRSF016262">
    <property type="entry name" value="LPLase"/>
    <property type="match status" value="1"/>
</dbReference>
<dbReference type="SUPFAM" id="SSF55681">
    <property type="entry name" value="Class II aaRS and biotin synthetases"/>
    <property type="match status" value="1"/>
</dbReference>
<dbReference type="PROSITE" id="PS51733">
    <property type="entry name" value="BPL_LPL_CATALYTIC"/>
    <property type="match status" value="1"/>
</dbReference>
<dbReference type="PROSITE" id="PS01313">
    <property type="entry name" value="LIPB"/>
    <property type="match status" value="1"/>
</dbReference>
<name>LIPB_LEPIC</name>
<proteinExistence type="inferred from homology"/>
<feature type="chain" id="PRO_0000062844" description="Octanoyltransferase">
    <location>
        <begin position="1"/>
        <end position="216"/>
    </location>
</feature>
<feature type="domain" description="BPL/LPL catalytic" evidence="2">
    <location>
        <begin position="24"/>
        <end position="212"/>
    </location>
</feature>
<feature type="active site" description="Acyl-thioester intermediate" evidence="1">
    <location>
        <position position="171"/>
    </location>
</feature>
<feature type="binding site" evidence="1">
    <location>
        <begin position="69"/>
        <end position="76"/>
    </location>
    <ligand>
        <name>substrate</name>
    </ligand>
</feature>
<feature type="binding site" evidence="1">
    <location>
        <begin position="140"/>
        <end position="142"/>
    </location>
    <ligand>
        <name>substrate</name>
    </ligand>
</feature>
<feature type="binding site" evidence="1">
    <location>
        <begin position="153"/>
        <end position="155"/>
    </location>
    <ligand>
        <name>substrate</name>
    </ligand>
</feature>
<feature type="site" description="Lowers pKa of active site Cys" evidence="1">
    <location>
        <position position="137"/>
    </location>
</feature>
<comment type="function">
    <text evidence="1">Catalyzes the transfer of endogenously produced octanoic acid from octanoyl-acyl-carrier-protein onto the lipoyl domains of lipoate-dependent enzymes. Lipoyl-ACP can also act as a substrate although octanoyl-ACP is likely to be the physiological substrate.</text>
</comment>
<comment type="catalytic activity">
    <reaction evidence="1">
        <text>octanoyl-[ACP] + L-lysyl-[protein] = N(6)-octanoyl-L-lysyl-[protein] + holo-[ACP] + H(+)</text>
        <dbReference type="Rhea" id="RHEA:17665"/>
        <dbReference type="Rhea" id="RHEA-COMP:9636"/>
        <dbReference type="Rhea" id="RHEA-COMP:9685"/>
        <dbReference type="Rhea" id="RHEA-COMP:9752"/>
        <dbReference type="Rhea" id="RHEA-COMP:9928"/>
        <dbReference type="ChEBI" id="CHEBI:15378"/>
        <dbReference type="ChEBI" id="CHEBI:29969"/>
        <dbReference type="ChEBI" id="CHEBI:64479"/>
        <dbReference type="ChEBI" id="CHEBI:78463"/>
        <dbReference type="ChEBI" id="CHEBI:78809"/>
        <dbReference type="EC" id="2.3.1.181"/>
    </reaction>
</comment>
<comment type="pathway">
    <text evidence="1">Protein modification; protein lipoylation via endogenous pathway; protein N(6)-(lipoyl)lysine from octanoyl-[acyl-carrier-protein]: step 1/2.</text>
</comment>
<comment type="subcellular location">
    <subcellularLocation>
        <location evidence="1">Cytoplasm</location>
    </subcellularLocation>
</comment>
<comment type="miscellaneous">
    <text evidence="1">In the reaction, the free carboxyl group of octanoic acid is attached via an amide linkage to the epsilon-amino group of a specific lysine residue of lipoyl domains of lipoate-dependent enzymes.</text>
</comment>
<comment type="similarity">
    <text evidence="1">Belongs to the LipB family.</text>
</comment>
<gene>
    <name evidence="1" type="primary">lipB</name>
    <name type="ordered locus">LIC_12072</name>
</gene>
<reference key="1">
    <citation type="journal article" date="2004" name="J. Bacteriol.">
        <title>Comparative genomics of two Leptospira interrogans serovars reveals novel insights into physiology and pathogenesis.</title>
        <authorList>
            <person name="Nascimento A.L.T.O."/>
            <person name="Ko A.I."/>
            <person name="Martins E.A.L."/>
            <person name="Monteiro-Vitorello C.B."/>
            <person name="Ho P.L."/>
            <person name="Haake D.A."/>
            <person name="Verjovski-Almeida S."/>
            <person name="Hartskeerl R.A."/>
            <person name="Marques M.V."/>
            <person name="Oliveira M.C."/>
            <person name="Menck C.F.M."/>
            <person name="Leite L.C.C."/>
            <person name="Carrer H."/>
            <person name="Coutinho L.L."/>
            <person name="Degrave W.M."/>
            <person name="Dellagostin O.A."/>
            <person name="El-Dorry H."/>
            <person name="Ferro E.S."/>
            <person name="Ferro M.I.T."/>
            <person name="Furlan L.R."/>
            <person name="Gamberini M."/>
            <person name="Giglioti E.A."/>
            <person name="Goes-Neto A."/>
            <person name="Goldman G.H."/>
            <person name="Goldman M.H.S."/>
            <person name="Harakava R."/>
            <person name="Jeronimo S.M.B."/>
            <person name="Junqueira-de-Azevedo I.L.M."/>
            <person name="Kimura E.T."/>
            <person name="Kuramae E.E."/>
            <person name="Lemos E.G.M."/>
            <person name="Lemos M.V.F."/>
            <person name="Marino C.L."/>
            <person name="Nunes L.R."/>
            <person name="de Oliveira R.C."/>
            <person name="Pereira G.G."/>
            <person name="Reis M.S."/>
            <person name="Schriefer A."/>
            <person name="Siqueira W.J."/>
            <person name="Sommer P."/>
            <person name="Tsai S.M."/>
            <person name="Simpson A.J.G."/>
            <person name="Ferro J.A."/>
            <person name="Camargo L.E.A."/>
            <person name="Kitajima J.P."/>
            <person name="Setubal J.C."/>
            <person name="Van Sluys M.A."/>
        </authorList>
    </citation>
    <scope>NUCLEOTIDE SEQUENCE [LARGE SCALE GENOMIC DNA]</scope>
    <source>
        <strain>Fiocruz L1-130</strain>
    </source>
</reference>
<keyword id="KW-0012">Acyltransferase</keyword>
<keyword id="KW-0963">Cytoplasm</keyword>
<keyword id="KW-0808">Transferase</keyword>
<accession>Q72QP1</accession>
<protein>
    <recommendedName>
        <fullName evidence="1">Octanoyltransferase</fullName>
        <ecNumber evidence="1">2.3.1.181</ecNumber>
    </recommendedName>
    <alternativeName>
        <fullName evidence="1">Lipoate-protein ligase B</fullName>
    </alternativeName>
    <alternativeName>
        <fullName evidence="1">Lipoyl/octanoyl transferase</fullName>
    </alternativeName>
    <alternativeName>
        <fullName evidence="1">Octanoyl-[acyl-carrier-protein]-protein N-octanoyltransferase</fullName>
    </alternativeName>
</protein>
<evidence type="ECO:0000255" key="1">
    <source>
        <dbReference type="HAMAP-Rule" id="MF_00013"/>
    </source>
</evidence>
<evidence type="ECO:0000255" key="2">
    <source>
        <dbReference type="PROSITE-ProRule" id="PRU01067"/>
    </source>
</evidence>
<sequence length="216" mass="24952">MKIIEFRKKIPYLRYLEMQEKLRKFRKECILFLEHAPTITGGINYNPENLLVKPEFLESMGIQIHWTQRGGDFTAHEPGQLVLYSHVDLKKRNLSIRFYLENLLRSVIDSVRSTWDLQLISDSDSPGLYLESNPSQKICSIGVNFKSFFTSHGIAFNLSNDLKTFRCINPCGRNWTNMTSVKDLGLDFGLHKRDELISCLKKNLCSFLEPINVSSS</sequence>
<organism>
    <name type="scientific">Leptospira interrogans serogroup Icterohaemorrhagiae serovar copenhageni (strain Fiocruz L1-130)</name>
    <dbReference type="NCBI Taxonomy" id="267671"/>
    <lineage>
        <taxon>Bacteria</taxon>
        <taxon>Pseudomonadati</taxon>
        <taxon>Spirochaetota</taxon>
        <taxon>Spirochaetia</taxon>
        <taxon>Leptospirales</taxon>
        <taxon>Leptospiraceae</taxon>
        <taxon>Leptospira</taxon>
    </lineage>
</organism>